<keyword id="KW-0027">Amidation</keyword>
<keyword id="KW-1015">Disulfide bond</keyword>
<keyword id="KW-0872">Ion channel impairing toxin</keyword>
<keyword id="KW-0960">Knottin</keyword>
<keyword id="KW-0528">Neurotoxin</keyword>
<keyword id="KW-0638">Presynaptic neurotoxin</keyword>
<keyword id="KW-0964">Secreted</keyword>
<keyword id="KW-0732">Signal</keyword>
<keyword id="KW-0800">Toxin</keyword>
<keyword id="KW-0738">Voltage-gated sodium channel impairing toxin</keyword>
<sequence length="83" mass="9241">MKASMYLALAGLVLLFVVGYASESEEKEFPRELLSKIFAVDDFKGEERGCKGFSDSCTPGKNECCPNYACSSKHKWCKVYLGK</sequence>
<dbReference type="EMBL" id="GU292866">
    <property type="protein sequence ID" value="ADB56682.1"/>
    <property type="molecule type" value="mRNA"/>
</dbReference>
<dbReference type="SMR" id="D2Y1Y9"/>
<dbReference type="ArachnoServer" id="AS001604">
    <property type="toxin name" value="mu-theraphotoxin-Hhn2n"/>
</dbReference>
<dbReference type="GO" id="GO:0005576">
    <property type="term" value="C:extracellular region"/>
    <property type="evidence" value="ECO:0007669"/>
    <property type="project" value="UniProtKB-SubCell"/>
</dbReference>
<dbReference type="GO" id="GO:0044231">
    <property type="term" value="C:host cell presynaptic membrane"/>
    <property type="evidence" value="ECO:0007669"/>
    <property type="project" value="UniProtKB-KW"/>
</dbReference>
<dbReference type="GO" id="GO:0008200">
    <property type="term" value="F:ion channel inhibitor activity"/>
    <property type="evidence" value="ECO:0007669"/>
    <property type="project" value="InterPro"/>
</dbReference>
<dbReference type="GO" id="GO:0017080">
    <property type="term" value="F:sodium channel regulator activity"/>
    <property type="evidence" value="ECO:0007669"/>
    <property type="project" value="UniProtKB-KW"/>
</dbReference>
<dbReference type="GO" id="GO:0090729">
    <property type="term" value="F:toxin activity"/>
    <property type="evidence" value="ECO:0007669"/>
    <property type="project" value="UniProtKB-KW"/>
</dbReference>
<dbReference type="InterPro" id="IPR011696">
    <property type="entry name" value="Huwentoxin-1"/>
</dbReference>
<dbReference type="InterPro" id="IPR013140">
    <property type="entry name" value="Huwentoxin_CS1"/>
</dbReference>
<dbReference type="Pfam" id="PF07740">
    <property type="entry name" value="Toxin_12"/>
    <property type="match status" value="1"/>
</dbReference>
<dbReference type="SUPFAM" id="SSF57059">
    <property type="entry name" value="omega toxin-like"/>
    <property type="match status" value="1"/>
</dbReference>
<dbReference type="PROSITE" id="PS60021">
    <property type="entry name" value="HWTX_1"/>
    <property type="match status" value="1"/>
</dbReference>
<evidence type="ECO:0000250" key="1"/>
<evidence type="ECO:0000255" key="2"/>
<evidence type="ECO:0000305" key="3"/>
<proteinExistence type="evidence at transcript level"/>
<accession>D2Y1Y9</accession>
<reference key="1">
    <citation type="journal article" date="2010" name="J. Proteome Res.">
        <title>Molecular diversification of peptide toxins from the tarantula Haplopelma hainanum (Ornithoctonus hainana) venom based on transcriptomic, peptidomic, and genomic analyses.</title>
        <authorList>
            <person name="Tang X."/>
            <person name="Zhang Y."/>
            <person name="Hu W."/>
            <person name="Xu D."/>
            <person name="Tao H."/>
            <person name="Yang X."/>
            <person name="Li Y."/>
            <person name="Jiang L."/>
            <person name="Liang S."/>
        </authorList>
    </citation>
    <scope>NUCLEOTIDE SEQUENCE [LARGE SCALE MRNA]</scope>
    <source>
        <tissue>Venom gland</tissue>
    </source>
</reference>
<organism>
    <name type="scientific">Cyriopagopus hainanus</name>
    <name type="common">Chinese bird spider</name>
    <name type="synonym">Haplopelma hainanum</name>
    <dbReference type="NCBI Taxonomy" id="209901"/>
    <lineage>
        <taxon>Eukaryota</taxon>
        <taxon>Metazoa</taxon>
        <taxon>Ecdysozoa</taxon>
        <taxon>Arthropoda</taxon>
        <taxon>Chelicerata</taxon>
        <taxon>Arachnida</taxon>
        <taxon>Araneae</taxon>
        <taxon>Mygalomorphae</taxon>
        <taxon>Theraphosidae</taxon>
        <taxon>Haplopelma</taxon>
    </lineage>
</organism>
<protein>
    <recommendedName>
        <fullName>Mu-theraphotoxin-Hhn2n</fullName>
        <shortName>Mu-TRTX-Hhn2n</shortName>
    </recommendedName>
    <alternativeName>
        <fullName>Hainantoxin-III-6</fullName>
        <shortName>HNTX-III-6</shortName>
    </alternativeName>
</protein>
<feature type="signal peptide" evidence="2">
    <location>
        <begin position="1"/>
        <end position="21"/>
    </location>
</feature>
<feature type="propeptide" id="PRO_0000400544" evidence="1">
    <location>
        <begin position="22"/>
        <end position="48"/>
    </location>
</feature>
<feature type="peptide" id="PRO_0000400545" description="Mu-theraphotoxin-Hhn2n">
    <location>
        <begin position="49"/>
        <end position="81"/>
    </location>
</feature>
<feature type="modified residue" description="Leucine amide" evidence="1">
    <location>
        <position position="81"/>
    </location>
</feature>
<feature type="disulfide bond" evidence="1">
    <location>
        <begin position="50"/>
        <end position="65"/>
    </location>
</feature>
<feature type="disulfide bond" evidence="1">
    <location>
        <begin position="57"/>
        <end position="70"/>
    </location>
</feature>
<feature type="disulfide bond" evidence="1">
    <location>
        <begin position="64"/>
        <end position="77"/>
    </location>
</feature>
<name>H3F01_CYRHA</name>
<comment type="function">
    <text evidence="1">Lethal neurotoxin. Selectively blocks tetrodotoxin-sensitive voltage-gated sodium channels (Nav). Does not affect tetrodotoxin-resistant voltage-gated sodium channels or calcium channels (By similarity).</text>
</comment>
<comment type="subunit">
    <text evidence="1">Monomer.</text>
</comment>
<comment type="subcellular location">
    <subcellularLocation>
        <location evidence="1">Secreted</location>
    </subcellularLocation>
</comment>
<comment type="tissue specificity">
    <text>Expressed by the venom gland.</text>
</comment>
<comment type="domain">
    <text evidence="1">The presence of a 'disulfide through disulfide knot' structurally defines this protein as a knottin.</text>
</comment>
<comment type="similarity">
    <text evidence="3">Belongs to the neurotoxin 10 (Hwtx-1) family. 15 (Hntx-3) subfamily.</text>
</comment>